<accession>Q2YUJ0</accession>
<feature type="chain" id="PRO_1000046981" description="UPF0340 protein SAB1998c">
    <location>
        <begin position="1"/>
        <end position="174"/>
    </location>
</feature>
<organism>
    <name type="scientific">Staphylococcus aureus (strain bovine RF122 / ET3-1)</name>
    <dbReference type="NCBI Taxonomy" id="273036"/>
    <lineage>
        <taxon>Bacteria</taxon>
        <taxon>Bacillati</taxon>
        <taxon>Bacillota</taxon>
        <taxon>Bacilli</taxon>
        <taxon>Bacillales</taxon>
        <taxon>Staphylococcaceae</taxon>
        <taxon>Staphylococcus</taxon>
    </lineage>
</organism>
<protein>
    <recommendedName>
        <fullName evidence="1">UPF0340 protein SAB1998c</fullName>
    </recommendedName>
</protein>
<name>Y1998_STAAB</name>
<comment type="similarity">
    <text evidence="1">Belongs to the UPF0340 family.</text>
</comment>
<dbReference type="EMBL" id="AJ938182">
    <property type="protein sequence ID" value="CAI81687.1"/>
    <property type="molecule type" value="Genomic_DNA"/>
</dbReference>
<dbReference type="RefSeq" id="WP_000654181.1">
    <property type="nucleotide sequence ID" value="NC_007622.1"/>
</dbReference>
<dbReference type="SMR" id="Q2YUJ0"/>
<dbReference type="KEGG" id="sab:SAB1998c"/>
<dbReference type="HOGENOM" id="CLU_106658_0_0_9"/>
<dbReference type="Gene3D" id="3.40.50.10360">
    <property type="entry name" value="Hypothetical protein TT1679"/>
    <property type="match status" value="1"/>
</dbReference>
<dbReference type="HAMAP" id="MF_00800">
    <property type="entry name" value="UPF0340"/>
    <property type="match status" value="1"/>
</dbReference>
<dbReference type="InterPro" id="IPR028345">
    <property type="entry name" value="Antibiotic_NAT-like"/>
</dbReference>
<dbReference type="InterPro" id="IPR006340">
    <property type="entry name" value="DUF436"/>
</dbReference>
<dbReference type="NCBIfam" id="TIGR01440">
    <property type="entry name" value="TIGR01440 family protein"/>
    <property type="match status" value="1"/>
</dbReference>
<dbReference type="Pfam" id="PF04260">
    <property type="entry name" value="DUF436"/>
    <property type="match status" value="1"/>
</dbReference>
<dbReference type="PIRSF" id="PIRSF007510">
    <property type="entry name" value="UCP007510"/>
    <property type="match status" value="1"/>
</dbReference>
<dbReference type="SUPFAM" id="SSF110710">
    <property type="entry name" value="TTHA0583/YokD-like"/>
    <property type="match status" value="1"/>
</dbReference>
<reference key="1">
    <citation type="journal article" date="2007" name="PLoS ONE">
        <title>Molecular correlates of host specialization in Staphylococcus aureus.</title>
        <authorList>
            <person name="Herron-Olson L."/>
            <person name="Fitzgerald J.R."/>
            <person name="Musser J.M."/>
            <person name="Kapur V."/>
        </authorList>
    </citation>
    <scope>NUCLEOTIDE SEQUENCE [LARGE SCALE GENOMIC DNA]</scope>
    <source>
        <strain>bovine RF122 / ET3-1</strain>
    </source>
</reference>
<gene>
    <name type="ordered locus">SAB1998c</name>
</gene>
<sequence length="174" mass="18879">MKDLTMLLDELKDMSFFNKGDICLIGCSTSEVIGEKIGTVGSMEVAETIFNALDVVSKETGVTFAFQGCEHINRAITIEKSQFNPLTMEEVSVVPDVHAGGSLATYAFQHMKDPIVVEHITVPCGIDIGQTLIGMHIKHVCVPVRTSVKQVGQAIVTIATSRPKKIGGERAKYQ</sequence>
<proteinExistence type="inferred from homology"/>
<evidence type="ECO:0000255" key="1">
    <source>
        <dbReference type="HAMAP-Rule" id="MF_00800"/>
    </source>
</evidence>